<name>VGFR2_RAT</name>
<dbReference type="EC" id="2.7.10.1" evidence="3"/>
<dbReference type="EMBL" id="U93306">
    <property type="protein sequence ID" value="AAB97508.1"/>
    <property type="molecule type" value="mRNA"/>
</dbReference>
<dbReference type="EMBL" id="U93307">
    <property type="protein sequence ID" value="AAB97509.1"/>
    <property type="molecule type" value="mRNA"/>
</dbReference>
<dbReference type="RefSeq" id="NP_037194.1">
    <property type="nucleotide sequence ID" value="NM_013062.1"/>
</dbReference>
<dbReference type="SMR" id="O08775"/>
<dbReference type="FunCoup" id="O08775">
    <property type="interactions" value="1319"/>
</dbReference>
<dbReference type="IntAct" id="O08775">
    <property type="interactions" value="1"/>
</dbReference>
<dbReference type="MINT" id="O08775"/>
<dbReference type="STRING" id="10116.ENSRNOP00000066886"/>
<dbReference type="BindingDB" id="O08775"/>
<dbReference type="GlyCosmos" id="O08775">
    <property type="glycosylation" value="16 sites, No reported glycans"/>
</dbReference>
<dbReference type="GlyGen" id="O08775">
    <property type="glycosylation" value="17 sites"/>
</dbReference>
<dbReference type="iPTMnet" id="O08775"/>
<dbReference type="PhosphoSitePlus" id="O08775"/>
<dbReference type="jPOST" id="O08775"/>
<dbReference type="PaxDb" id="10116-ENSRNOP00000066886"/>
<dbReference type="GeneID" id="25589"/>
<dbReference type="KEGG" id="rno:25589"/>
<dbReference type="AGR" id="RGD:2965"/>
<dbReference type="CTD" id="3791"/>
<dbReference type="RGD" id="2965">
    <property type="gene designation" value="Kdr"/>
</dbReference>
<dbReference type="eggNOG" id="KOG0200">
    <property type="taxonomic scope" value="Eukaryota"/>
</dbReference>
<dbReference type="InParanoid" id="O08775"/>
<dbReference type="OrthoDB" id="9873386at2759"/>
<dbReference type="PhylomeDB" id="O08775"/>
<dbReference type="BRENDA" id="2.7.10.1">
    <property type="organism ID" value="5301"/>
</dbReference>
<dbReference type="Reactome" id="R-RNO-194306">
    <property type="pathway name" value="Neurophilin interactions with VEGF and VEGFR"/>
</dbReference>
<dbReference type="Reactome" id="R-RNO-195399">
    <property type="pathway name" value="VEGF binds to VEGFR leading to receptor dimerization"/>
</dbReference>
<dbReference type="Reactome" id="R-RNO-4420097">
    <property type="pathway name" value="VEGFA-VEGFR2 Pathway"/>
</dbReference>
<dbReference type="Reactome" id="R-RNO-5218921">
    <property type="pathway name" value="VEGFR2 mediated cell proliferation"/>
</dbReference>
<dbReference type="PRO" id="PR:O08775"/>
<dbReference type="Proteomes" id="UP000002494">
    <property type="component" value="Unplaced"/>
</dbReference>
<dbReference type="GO" id="GO:0070161">
    <property type="term" value="C:anchoring junction"/>
    <property type="evidence" value="ECO:0007669"/>
    <property type="project" value="UniProtKB-SubCell"/>
</dbReference>
<dbReference type="GO" id="GO:0030054">
    <property type="term" value="C:cell junction"/>
    <property type="evidence" value="ECO:0000250"/>
    <property type="project" value="UniProtKB"/>
</dbReference>
<dbReference type="GO" id="GO:0071944">
    <property type="term" value="C:cell periphery"/>
    <property type="evidence" value="ECO:0000266"/>
    <property type="project" value="RGD"/>
</dbReference>
<dbReference type="GO" id="GO:0009986">
    <property type="term" value="C:cell surface"/>
    <property type="evidence" value="ECO:0000266"/>
    <property type="project" value="RGD"/>
</dbReference>
<dbReference type="GO" id="GO:0005737">
    <property type="term" value="C:cytoplasm"/>
    <property type="evidence" value="ECO:0000266"/>
    <property type="project" value="RGD"/>
</dbReference>
<dbReference type="GO" id="GO:0005769">
    <property type="term" value="C:early endosome"/>
    <property type="evidence" value="ECO:0000266"/>
    <property type="project" value="RGD"/>
</dbReference>
<dbReference type="GO" id="GO:0005783">
    <property type="term" value="C:endoplasmic reticulum"/>
    <property type="evidence" value="ECO:0000250"/>
    <property type="project" value="UniProtKB"/>
</dbReference>
<dbReference type="GO" id="GO:0005768">
    <property type="term" value="C:endosome"/>
    <property type="evidence" value="ECO:0000266"/>
    <property type="project" value="RGD"/>
</dbReference>
<dbReference type="GO" id="GO:0009897">
    <property type="term" value="C:external side of plasma membrane"/>
    <property type="evidence" value="ECO:0000266"/>
    <property type="project" value="RGD"/>
</dbReference>
<dbReference type="GO" id="GO:0005794">
    <property type="term" value="C:Golgi apparatus"/>
    <property type="evidence" value="ECO:0000266"/>
    <property type="project" value="RGD"/>
</dbReference>
<dbReference type="GO" id="GO:0045121">
    <property type="term" value="C:membrane raft"/>
    <property type="evidence" value="ECO:0000266"/>
    <property type="project" value="RGD"/>
</dbReference>
<dbReference type="GO" id="GO:0043025">
    <property type="term" value="C:neuronal cell body"/>
    <property type="evidence" value="ECO:0000314"/>
    <property type="project" value="RGD"/>
</dbReference>
<dbReference type="GO" id="GO:0005634">
    <property type="term" value="C:nucleus"/>
    <property type="evidence" value="ECO:0000266"/>
    <property type="project" value="RGD"/>
</dbReference>
<dbReference type="GO" id="GO:0005886">
    <property type="term" value="C:plasma membrane"/>
    <property type="evidence" value="ECO:0000250"/>
    <property type="project" value="UniProtKB"/>
</dbReference>
<dbReference type="GO" id="GO:0043235">
    <property type="term" value="C:receptor complex"/>
    <property type="evidence" value="ECO:0000318"/>
    <property type="project" value="GO_Central"/>
</dbReference>
<dbReference type="GO" id="GO:0097443">
    <property type="term" value="C:sorting endosome"/>
    <property type="evidence" value="ECO:0000266"/>
    <property type="project" value="RGD"/>
</dbReference>
<dbReference type="GO" id="GO:0005524">
    <property type="term" value="F:ATP binding"/>
    <property type="evidence" value="ECO:0007669"/>
    <property type="project" value="UniProtKB-KW"/>
</dbReference>
<dbReference type="GO" id="GO:0045296">
    <property type="term" value="F:cadherin binding"/>
    <property type="evidence" value="ECO:0000266"/>
    <property type="project" value="RGD"/>
</dbReference>
<dbReference type="GO" id="GO:0015026">
    <property type="term" value="F:coreceptor activity"/>
    <property type="evidence" value="ECO:0000266"/>
    <property type="project" value="RGD"/>
</dbReference>
<dbReference type="GO" id="GO:0019838">
    <property type="term" value="F:growth factor binding"/>
    <property type="evidence" value="ECO:0000315"/>
    <property type="project" value="RGD"/>
</dbReference>
<dbReference type="GO" id="GO:0042802">
    <property type="term" value="F:identical protein binding"/>
    <property type="evidence" value="ECO:0000266"/>
    <property type="project" value="RGD"/>
</dbReference>
<dbReference type="GO" id="GO:0005178">
    <property type="term" value="F:integrin binding"/>
    <property type="evidence" value="ECO:0000266"/>
    <property type="project" value="RGD"/>
</dbReference>
<dbReference type="GO" id="GO:0004713">
    <property type="term" value="F:protein tyrosine kinase activity"/>
    <property type="evidence" value="ECO:0000266"/>
    <property type="project" value="RGD"/>
</dbReference>
<dbReference type="GO" id="GO:0038085">
    <property type="term" value="F:vascular endothelial growth factor binding"/>
    <property type="evidence" value="ECO:0000266"/>
    <property type="project" value="RGD"/>
</dbReference>
<dbReference type="GO" id="GO:0005021">
    <property type="term" value="F:vascular endothelial growth factor receptor activity"/>
    <property type="evidence" value="ECO:0000315"/>
    <property type="project" value="RGD"/>
</dbReference>
<dbReference type="GO" id="GO:0001525">
    <property type="term" value="P:angiogenesis"/>
    <property type="evidence" value="ECO:0000318"/>
    <property type="project" value="GO_Central"/>
</dbReference>
<dbReference type="GO" id="GO:0060837">
    <property type="term" value="P:blood vessel endothelial cell differentiation"/>
    <property type="evidence" value="ECO:0000266"/>
    <property type="project" value="RGD"/>
</dbReference>
<dbReference type="GO" id="GO:0001569">
    <property type="term" value="P:branching involved in blood vessel morphogenesis"/>
    <property type="evidence" value="ECO:0000266"/>
    <property type="project" value="RGD"/>
</dbReference>
<dbReference type="GO" id="GO:0048754">
    <property type="term" value="P:branching morphogenesis of an epithelial tube"/>
    <property type="evidence" value="ECO:0000266"/>
    <property type="project" value="RGD"/>
</dbReference>
<dbReference type="GO" id="GO:0055074">
    <property type="term" value="P:calcium ion homeostasis"/>
    <property type="evidence" value="ECO:0000266"/>
    <property type="project" value="RGD"/>
</dbReference>
<dbReference type="GO" id="GO:0045165">
    <property type="term" value="P:cell fate commitment"/>
    <property type="evidence" value="ECO:0000266"/>
    <property type="project" value="RGD"/>
</dbReference>
<dbReference type="GO" id="GO:0016477">
    <property type="term" value="P:cell migration"/>
    <property type="evidence" value="ECO:0000266"/>
    <property type="project" value="RGD"/>
</dbReference>
<dbReference type="GO" id="GO:0002042">
    <property type="term" value="P:cell migration involved in sprouting angiogenesis"/>
    <property type="evidence" value="ECO:0000266"/>
    <property type="project" value="RGD"/>
</dbReference>
<dbReference type="GO" id="GO:0007169">
    <property type="term" value="P:cell surface receptor protein tyrosine kinase signaling pathway"/>
    <property type="evidence" value="ECO:0000318"/>
    <property type="project" value="GO_Central"/>
</dbReference>
<dbReference type="GO" id="GO:1904881">
    <property type="term" value="P:cellular response to hydrogen sulfide"/>
    <property type="evidence" value="ECO:0000266"/>
    <property type="project" value="RGD"/>
</dbReference>
<dbReference type="GO" id="GO:0035924">
    <property type="term" value="P:cellular response to vascular endothelial growth factor stimulus"/>
    <property type="evidence" value="ECO:0000250"/>
    <property type="project" value="UniProtKB"/>
</dbReference>
<dbReference type="GO" id="GO:0035162">
    <property type="term" value="P:embryonic hemopoiesis"/>
    <property type="evidence" value="ECO:0000250"/>
    <property type="project" value="UniProtKB"/>
</dbReference>
<dbReference type="GO" id="GO:0003157">
    <property type="term" value="P:endocardium development"/>
    <property type="evidence" value="ECO:0000266"/>
    <property type="project" value="RGD"/>
</dbReference>
<dbReference type="GO" id="GO:0003416">
    <property type="term" value="P:endochondral bone growth"/>
    <property type="evidence" value="ECO:0000315"/>
    <property type="project" value="RGD"/>
</dbReference>
<dbReference type="GO" id="GO:0045446">
    <property type="term" value="P:endothelial cell differentiation"/>
    <property type="evidence" value="ECO:0000266"/>
    <property type="project" value="RGD"/>
</dbReference>
<dbReference type="GO" id="GO:0061154">
    <property type="term" value="P:endothelial tube morphogenesis"/>
    <property type="evidence" value="ECO:0000315"/>
    <property type="project" value="RGD"/>
</dbReference>
<dbReference type="GO" id="GO:0003158">
    <property type="term" value="P:endothelium development"/>
    <property type="evidence" value="ECO:0000250"/>
    <property type="project" value="UniProtKB"/>
</dbReference>
<dbReference type="GO" id="GO:0002070">
    <property type="term" value="P:epithelial cell maturation"/>
    <property type="evidence" value="ECO:0000266"/>
    <property type="project" value="RGD"/>
</dbReference>
<dbReference type="GO" id="GO:0050673">
    <property type="term" value="P:epithelial cell proliferation"/>
    <property type="evidence" value="ECO:0000266"/>
    <property type="project" value="RGD"/>
</dbReference>
<dbReference type="GO" id="GO:0030097">
    <property type="term" value="P:hemopoiesis"/>
    <property type="evidence" value="ECO:0000266"/>
    <property type="project" value="RGD"/>
</dbReference>
<dbReference type="GO" id="GO:0048286">
    <property type="term" value="P:lung alveolus development"/>
    <property type="evidence" value="ECO:0000266"/>
    <property type="project" value="RGD"/>
</dbReference>
<dbReference type="GO" id="GO:0030324">
    <property type="term" value="P:lung development"/>
    <property type="evidence" value="ECO:0000266"/>
    <property type="project" value="RGD"/>
</dbReference>
<dbReference type="GO" id="GO:0001945">
    <property type="term" value="P:lymph vessel development"/>
    <property type="evidence" value="ECO:0000266"/>
    <property type="project" value="RGD"/>
</dbReference>
<dbReference type="GO" id="GO:0008584">
    <property type="term" value="P:male gonad development"/>
    <property type="evidence" value="ECO:0000314"/>
    <property type="project" value="RGD"/>
</dbReference>
<dbReference type="GO" id="GO:0010463">
    <property type="term" value="P:mesenchymal cell proliferation"/>
    <property type="evidence" value="ECO:0000266"/>
    <property type="project" value="RGD"/>
</dbReference>
<dbReference type="GO" id="GO:2000352">
    <property type="term" value="P:negative regulation of endothelial cell apoptotic process"/>
    <property type="evidence" value="ECO:0000250"/>
    <property type="project" value="UniProtKB"/>
</dbReference>
<dbReference type="GO" id="GO:0010629">
    <property type="term" value="P:negative regulation of gene expression"/>
    <property type="evidence" value="ECO:0000266"/>
    <property type="project" value="RGD"/>
</dbReference>
<dbReference type="GO" id="GO:0043524">
    <property type="term" value="P:negative regulation of neuron apoptotic process"/>
    <property type="evidence" value="ECO:0000315"/>
    <property type="project" value="RGD"/>
</dbReference>
<dbReference type="GO" id="GO:0003085">
    <property type="term" value="P:negative regulation of systemic arterial blood pressure"/>
    <property type="evidence" value="ECO:0000316"/>
    <property type="project" value="RGD"/>
</dbReference>
<dbReference type="GO" id="GO:0048812">
    <property type="term" value="P:neuron projection morphogenesis"/>
    <property type="evidence" value="ECO:0000315"/>
    <property type="project" value="RGD"/>
</dbReference>
<dbReference type="GO" id="GO:0001541">
    <property type="term" value="P:ovarian follicle development"/>
    <property type="evidence" value="ECO:0000266"/>
    <property type="project" value="RGD"/>
</dbReference>
<dbReference type="GO" id="GO:0018108">
    <property type="term" value="P:peptidyl-tyrosine phosphorylation"/>
    <property type="evidence" value="ECO:0000250"/>
    <property type="project" value="UniProtKB"/>
</dbReference>
<dbReference type="GO" id="GO:0045766">
    <property type="term" value="P:positive regulation of angiogenesis"/>
    <property type="evidence" value="ECO:0000314"/>
    <property type="project" value="RGD"/>
</dbReference>
<dbReference type="GO" id="GO:0043536">
    <property type="term" value="P:positive regulation of blood vessel endothelial cell migration"/>
    <property type="evidence" value="ECO:0000266"/>
    <property type="project" value="RGD"/>
</dbReference>
<dbReference type="GO" id="GO:0030513">
    <property type="term" value="P:positive regulation of BMP signaling pathway"/>
    <property type="evidence" value="ECO:0000266"/>
    <property type="project" value="RGD"/>
</dbReference>
<dbReference type="GO" id="GO:0050850">
    <property type="term" value="P:positive regulation of calcium-mediated signaling"/>
    <property type="evidence" value="ECO:0000315"/>
    <property type="project" value="RGD"/>
</dbReference>
<dbReference type="GO" id="GO:0030335">
    <property type="term" value="P:positive regulation of cell migration"/>
    <property type="evidence" value="ECO:0000315"/>
    <property type="project" value="RGD"/>
</dbReference>
<dbReference type="GO" id="GO:0090050">
    <property type="term" value="P:positive regulation of cell migration involved in sprouting angiogenesis"/>
    <property type="evidence" value="ECO:0000266"/>
    <property type="project" value="RGD"/>
</dbReference>
<dbReference type="GO" id="GO:0008284">
    <property type="term" value="P:positive regulation of cell population proliferation"/>
    <property type="evidence" value="ECO:0000315"/>
    <property type="project" value="RGD"/>
</dbReference>
<dbReference type="GO" id="GO:0007204">
    <property type="term" value="P:positive regulation of cytosolic calcium ion concentration"/>
    <property type="evidence" value="ECO:0000315"/>
    <property type="project" value="RGD"/>
</dbReference>
<dbReference type="GO" id="GO:2001028">
    <property type="term" value="P:positive regulation of endothelial cell chemotaxis"/>
    <property type="evidence" value="ECO:0000266"/>
    <property type="project" value="RGD"/>
</dbReference>
<dbReference type="GO" id="GO:0010595">
    <property type="term" value="P:positive regulation of endothelial cell migration"/>
    <property type="evidence" value="ECO:0000266"/>
    <property type="project" value="RGD"/>
</dbReference>
<dbReference type="GO" id="GO:0001938">
    <property type="term" value="P:positive regulation of endothelial cell proliferation"/>
    <property type="evidence" value="ECO:0000315"/>
    <property type="project" value="RGD"/>
</dbReference>
<dbReference type="GO" id="GO:0050679">
    <property type="term" value="P:positive regulation of epithelial cell proliferation"/>
    <property type="evidence" value="ECO:0000266"/>
    <property type="project" value="RGD"/>
</dbReference>
<dbReference type="GO" id="GO:0070374">
    <property type="term" value="P:positive regulation of ERK1 and ERK2 cascade"/>
    <property type="evidence" value="ECO:0000266"/>
    <property type="project" value="RGD"/>
</dbReference>
<dbReference type="GO" id="GO:0051894">
    <property type="term" value="P:positive regulation of focal adhesion assembly"/>
    <property type="evidence" value="ECO:0000266"/>
    <property type="project" value="RGD"/>
</dbReference>
<dbReference type="GO" id="GO:0048170">
    <property type="term" value="P:positive regulation of long-term neuronal synaptic plasticity"/>
    <property type="evidence" value="ECO:0000315"/>
    <property type="project" value="RGD"/>
</dbReference>
<dbReference type="GO" id="GO:0016239">
    <property type="term" value="P:positive regulation of macroautophagy"/>
    <property type="evidence" value="ECO:0000266"/>
    <property type="project" value="RGD"/>
</dbReference>
<dbReference type="GO" id="GO:0043410">
    <property type="term" value="P:positive regulation of MAPK cascade"/>
    <property type="evidence" value="ECO:0000250"/>
    <property type="project" value="UniProtKB"/>
</dbReference>
<dbReference type="GO" id="GO:0002053">
    <property type="term" value="P:positive regulation of mesenchymal cell proliferation"/>
    <property type="evidence" value="ECO:0000266"/>
    <property type="project" value="RGD"/>
</dbReference>
<dbReference type="GO" id="GO:0051901">
    <property type="term" value="P:positive regulation of mitochondrial depolarization"/>
    <property type="evidence" value="ECO:0000266"/>
    <property type="project" value="RGD"/>
</dbReference>
<dbReference type="GO" id="GO:0090141">
    <property type="term" value="P:positive regulation of mitochondrial fission"/>
    <property type="evidence" value="ECO:0000266"/>
    <property type="project" value="RGD"/>
</dbReference>
<dbReference type="GO" id="GO:0050769">
    <property type="term" value="P:positive regulation of neurogenesis"/>
    <property type="evidence" value="ECO:0000270"/>
    <property type="project" value="RGD"/>
</dbReference>
<dbReference type="GO" id="GO:0141150">
    <property type="term" value="P:positive regulation of nitric oxide-cGMP mediated signal transduction"/>
    <property type="evidence" value="ECO:0000250"/>
    <property type="project" value="UniProtKB"/>
</dbReference>
<dbReference type="GO" id="GO:0051897">
    <property type="term" value="P:positive regulation of phosphatidylinositol 3-kinase/protein kinase B signal transduction"/>
    <property type="evidence" value="ECO:0000315"/>
    <property type="project" value="RGD"/>
</dbReference>
<dbReference type="GO" id="GO:0050927">
    <property type="term" value="P:positive regulation of positive chemotaxis"/>
    <property type="evidence" value="ECO:0000266"/>
    <property type="project" value="RGD"/>
</dbReference>
<dbReference type="GO" id="GO:0001934">
    <property type="term" value="P:positive regulation of protein phosphorylation"/>
    <property type="evidence" value="ECO:0000250"/>
    <property type="project" value="UniProtKB"/>
</dbReference>
<dbReference type="GO" id="GO:2000648">
    <property type="term" value="P:positive regulation of stem cell proliferation"/>
    <property type="evidence" value="ECO:0000266"/>
    <property type="project" value="RGD"/>
</dbReference>
<dbReference type="GO" id="GO:0032008">
    <property type="term" value="P:positive regulation of TOR signaling"/>
    <property type="evidence" value="ECO:0000315"/>
    <property type="project" value="RGD"/>
</dbReference>
<dbReference type="GO" id="GO:2001214">
    <property type="term" value="P:positive regulation of vasculogenesis"/>
    <property type="evidence" value="ECO:0000250"/>
    <property type="project" value="UniProtKB"/>
</dbReference>
<dbReference type="GO" id="GO:0048597">
    <property type="term" value="P:post-embryonic camera-type eye morphogenesis"/>
    <property type="evidence" value="ECO:0000266"/>
    <property type="project" value="RGD"/>
</dbReference>
<dbReference type="GO" id="GO:1903010">
    <property type="term" value="P:regulation of bone development"/>
    <property type="evidence" value="ECO:0000266"/>
    <property type="project" value="RGD"/>
</dbReference>
<dbReference type="GO" id="GO:0008360">
    <property type="term" value="P:regulation of cell shape"/>
    <property type="evidence" value="ECO:0000266"/>
    <property type="project" value="RGD"/>
</dbReference>
<dbReference type="GO" id="GO:1901532">
    <property type="term" value="P:regulation of hematopoietic progenitor cell differentiation"/>
    <property type="evidence" value="ECO:0000266"/>
    <property type="project" value="RGD"/>
</dbReference>
<dbReference type="GO" id="GO:0043408">
    <property type="term" value="P:regulation of MAPK cascade"/>
    <property type="evidence" value="ECO:0000318"/>
    <property type="project" value="GO_Central"/>
</dbReference>
<dbReference type="GO" id="GO:0048678">
    <property type="term" value="P:response to axon injury"/>
    <property type="evidence" value="ECO:0000270"/>
    <property type="project" value="RGD"/>
</dbReference>
<dbReference type="GO" id="GO:0001666">
    <property type="term" value="P:response to hypoxia"/>
    <property type="evidence" value="ECO:0000315"/>
    <property type="project" value="RGD"/>
</dbReference>
<dbReference type="GO" id="GO:0070482">
    <property type="term" value="P:response to oxygen levels"/>
    <property type="evidence" value="ECO:0000270"/>
    <property type="project" value="RGD"/>
</dbReference>
<dbReference type="GO" id="GO:0009410">
    <property type="term" value="P:response to xenobiotic stimulus"/>
    <property type="evidence" value="ECO:0000315"/>
    <property type="project" value="RGD"/>
</dbReference>
<dbReference type="GO" id="GO:0071526">
    <property type="term" value="P:semaphorin-plexin signaling pathway"/>
    <property type="evidence" value="ECO:0000266"/>
    <property type="project" value="RGD"/>
</dbReference>
<dbReference type="GO" id="GO:0072089">
    <property type="term" value="P:stem cell proliferation"/>
    <property type="evidence" value="ECO:0000266"/>
    <property type="project" value="RGD"/>
</dbReference>
<dbReference type="GO" id="GO:0043129">
    <property type="term" value="P:surfactant homeostasis"/>
    <property type="evidence" value="ECO:0000266"/>
    <property type="project" value="RGD"/>
</dbReference>
<dbReference type="GO" id="GO:0048010">
    <property type="term" value="P:vascular endothelial growth factor receptor signaling pathway"/>
    <property type="evidence" value="ECO:0000315"/>
    <property type="project" value="RGD"/>
</dbReference>
<dbReference type="GO" id="GO:0036324">
    <property type="term" value="P:vascular endothelial growth factor receptor-2 signaling pathway"/>
    <property type="evidence" value="ECO:0000250"/>
    <property type="project" value="UniProtKB"/>
</dbReference>
<dbReference type="GO" id="GO:0038084">
    <property type="term" value="P:vascular endothelial growth factor signaling pathway"/>
    <property type="evidence" value="ECO:0000266"/>
    <property type="project" value="RGD"/>
</dbReference>
<dbReference type="GO" id="GO:0061042">
    <property type="term" value="P:vascular wound healing"/>
    <property type="evidence" value="ECO:0000266"/>
    <property type="project" value="RGD"/>
</dbReference>
<dbReference type="GO" id="GO:0001570">
    <property type="term" value="P:vasculogenesis"/>
    <property type="evidence" value="ECO:0000250"/>
    <property type="project" value="UniProtKB"/>
</dbReference>
<dbReference type="GO" id="GO:0042311">
    <property type="term" value="P:vasodilation"/>
    <property type="evidence" value="ECO:0000316"/>
    <property type="project" value="RGD"/>
</dbReference>
<dbReference type="CDD" id="cd00096">
    <property type="entry name" value="Ig"/>
    <property type="match status" value="1"/>
</dbReference>
<dbReference type="CDD" id="cd05103">
    <property type="entry name" value="PTKc_VEGFR2"/>
    <property type="match status" value="1"/>
</dbReference>
<dbReference type="FunFam" id="1.10.510.10:FF:000077">
    <property type="entry name" value="Vascular endothelial growth factor receptor 2"/>
    <property type="match status" value="1"/>
</dbReference>
<dbReference type="FunFam" id="2.60.40.10:FF:000532">
    <property type="entry name" value="Vascular endothelial growth factor receptor 2"/>
    <property type="match status" value="1"/>
</dbReference>
<dbReference type="FunFam" id="2.60.40.10:FF:000596">
    <property type="entry name" value="Vascular endothelial growth factor receptor 2"/>
    <property type="match status" value="1"/>
</dbReference>
<dbReference type="FunFam" id="2.60.40.10:FF:000669">
    <property type="entry name" value="Vascular endothelial growth factor receptor 2"/>
    <property type="match status" value="1"/>
</dbReference>
<dbReference type="FunFam" id="2.60.40.10:FF:000767">
    <property type="entry name" value="Vascular endothelial growth factor receptor 2"/>
    <property type="match status" value="1"/>
</dbReference>
<dbReference type="FunFam" id="2.60.40.10:FF:000880">
    <property type="entry name" value="Vascular endothelial growth factor receptor 2"/>
    <property type="match status" value="1"/>
</dbReference>
<dbReference type="FunFam" id="3.30.200.20:FF:000041">
    <property type="entry name" value="Vascular endothelial growth factor receptor 2"/>
    <property type="match status" value="1"/>
</dbReference>
<dbReference type="FunFam" id="2.60.40.10:FF:000143">
    <property type="entry name" value="Vascular endothelial growth factor receptor 3"/>
    <property type="match status" value="1"/>
</dbReference>
<dbReference type="FunFam" id="2.60.40.10:FF:000247">
    <property type="entry name" value="Vascular endothelial growth factor receptor 3"/>
    <property type="match status" value="1"/>
</dbReference>
<dbReference type="Gene3D" id="2.60.40.10">
    <property type="entry name" value="Immunoglobulins"/>
    <property type="match status" value="7"/>
</dbReference>
<dbReference type="Gene3D" id="3.30.200.20">
    <property type="entry name" value="Phosphorylase Kinase, domain 1"/>
    <property type="match status" value="1"/>
</dbReference>
<dbReference type="Gene3D" id="1.10.510.10">
    <property type="entry name" value="Transferase(Phosphotransferase) domain 1"/>
    <property type="match status" value="1"/>
</dbReference>
<dbReference type="InterPro" id="IPR007110">
    <property type="entry name" value="Ig-like_dom"/>
</dbReference>
<dbReference type="InterPro" id="IPR036179">
    <property type="entry name" value="Ig-like_dom_sf"/>
</dbReference>
<dbReference type="InterPro" id="IPR013783">
    <property type="entry name" value="Ig-like_fold"/>
</dbReference>
<dbReference type="InterPro" id="IPR013098">
    <property type="entry name" value="Ig_I-set"/>
</dbReference>
<dbReference type="InterPro" id="IPR003599">
    <property type="entry name" value="Ig_sub"/>
</dbReference>
<dbReference type="InterPro" id="IPR003598">
    <property type="entry name" value="Ig_sub2"/>
</dbReference>
<dbReference type="InterPro" id="IPR013151">
    <property type="entry name" value="Immunoglobulin_dom"/>
</dbReference>
<dbReference type="InterPro" id="IPR011009">
    <property type="entry name" value="Kinase-like_dom_sf"/>
</dbReference>
<dbReference type="InterPro" id="IPR000719">
    <property type="entry name" value="Prot_kinase_dom"/>
</dbReference>
<dbReference type="InterPro" id="IPR017441">
    <property type="entry name" value="Protein_kinase_ATP_BS"/>
</dbReference>
<dbReference type="InterPro" id="IPR050122">
    <property type="entry name" value="RTK"/>
</dbReference>
<dbReference type="InterPro" id="IPR001245">
    <property type="entry name" value="Ser-Thr/Tyr_kinase_cat_dom"/>
</dbReference>
<dbReference type="InterPro" id="IPR008266">
    <property type="entry name" value="Tyr_kinase_AS"/>
</dbReference>
<dbReference type="InterPro" id="IPR020635">
    <property type="entry name" value="Tyr_kinase_cat_dom"/>
</dbReference>
<dbReference type="InterPro" id="IPR001824">
    <property type="entry name" value="Tyr_kinase_rcpt_3_CS"/>
</dbReference>
<dbReference type="InterPro" id="IPR041348">
    <property type="entry name" value="VEGFR-2_TMD"/>
</dbReference>
<dbReference type="InterPro" id="IPR055229">
    <property type="entry name" value="VEGFR1-3_5th"/>
</dbReference>
<dbReference type="InterPro" id="IPR055238">
    <property type="entry name" value="VEGFR1-3_N_Ig-like"/>
</dbReference>
<dbReference type="InterPro" id="IPR009136">
    <property type="entry name" value="VEGFR2_rcpt"/>
</dbReference>
<dbReference type="PANTHER" id="PTHR24416">
    <property type="entry name" value="TYROSINE-PROTEIN KINASE RECEPTOR"/>
    <property type="match status" value="1"/>
</dbReference>
<dbReference type="PANTHER" id="PTHR24416:SF45">
    <property type="entry name" value="VASCULAR ENDOTHELIAL GROWTH FACTOR RECEPTOR 2"/>
    <property type="match status" value="1"/>
</dbReference>
<dbReference type="Pfam" id="PF07679">
    <property type="entry name" value="I-set"/>
    <property type="match status" value="2"/>
</dbReference>
<dbReference type="Pfam" id="PF00047">
    <property type="entry name" value="ig"/>
    <property type="match status" value="1"/>
</dbReference>
<dbReference type="Pfam" id="PF13927">
    <property type="entry name" value="Ig_3"/>
    <property type="match status" value="1"/>
</dbReference>
<dbReference type="Pfam" id="PF22971">
    <property type="entry name" value="Ig_VEGFR-1-like_5th"/>
    <property type="match status" value="1"/>
</dbReference>
<dbReference type="Pfam" id="PF07714">
    <property type="entry name" value="PK_Tyr_Ser-Thr"/>
    <property type="match status" value="1"/>
</dbReference>
<dbReference type="Pfam" id="PF21339">
    <property type="entry name" value="VEGFR-1-like_Ig-like"/>
    <property type="match status" value="1"/>
</dbReference>
<dbReference type="Pfam" id="PF17988">
    <property type="entry name" value="VEGFR-2_TMD"/>
    <property type="match status" value="1"/>
</dbReference>
<dbReference type="Pfam" id="PF22854">
    <property type="entry name" value="VEGFR1-3_N_Ig-like"/>
    <property type="match status" value="1"/>
</dbReference>
<dbReference type="PIRSF" id="PIRSF000615">
    <property type="entry name" value="TyrPK_CSF1-R"/>
    <property type="match status" value="1"/>
</dbReference>
<dbReference type="PRINTS" id="PR01832">
    <property type="entry name" value="VEGFRECEPTOR"/>
</dbReference>
<dbReference type="PRINTS" id="PR01834">
    <property type="entry name" value="VEGFRECEPTR2"/>
</dbReference>
<dbReference type="SMART" id="SM00409">
    <property type="entry name" value="IG"/>
    <property type="match status" value="7"/>
</dbReference>
<dbReference type="SMART" id="SM00408">
    <property type="entry name" value="IGc2"/>
    <property type="match status" value="5"/>
</dbReference>
<dbReference type="SMART" id="SM00219">
    <property type="entry name" value="TyrKc"/>
    <property type="match status" value="1"/>
</dbReference>
<dbReference type="SUPFAM" id="SSF48726">
    <property type="entry name" value="Immunoglobulin"/>
    <property type="match status" value="7"/>
</dbReference>
<dbReference type="SUPFAM" id="SSF56112">
    <property type="entry name" value="Protein kinase-like (PK-like)"/>
    <property type="match status" value="1"/>
</dbReference>
<dbReference type="PROSITE" id="PS50835">
    <property type="entry name" value="IG_LIKE"/>
    <property type="match status" value="5"/>
</dbReference>
<dbReference type="PROSITE" id="PS00107">
    <property type="entry name" value="PROTEIN_KINASE_ATP"/>
    <property type="match status" value="1"/>
</dbReference>
<dbReference type="PROSITE" id="PS50011">
    <property type="entry name" value="PROTEIN_KINASE_DOM"/>
    <property type="match status" value="1"/>
</dbReference>
<dbReference type="PROSITE" id="PS00109">
    <property type="entry name" value="PROTEIN_KINASE_TYR"/>
    <property type="match status" value="1"/>
</dbReference>
<dbReference type="PROSITE" id="PS00240">
    <property type="entry name" value="RECEPTOR_TYR_KIN_III"/>
    <property type="match status" value="1"/>
</dbReference>
<evidence type="ECO:0000250" key="1"/>
<evidence type="ECO:0000250" key="2">
    <source>
        <dbReference type="UniProtKB" id="P35918"/>
    </source>
</evidence>
<evidence type="ECO:0000250" key="3">
    <source>
        <dbReference type="UniProtKB" id="P35968"/>
    </source>
</evidence>
<evidence type="ECO:0000255" key="4"/>
<evidence type="ECO:0000255" key="5">
    <source>
        <dbReference type="PROSITE-ProRule" id="PRU00114"/>
    </source>
</evidence>
<evidence type="ECO:0000255" key="6">
    <source>
        <dbReference type="PROSITE-ProRule" id="PRU00159"/>
    </source>
</evidence>
<evidence type="ECO:0000255" key="7">
    <source>
        <dbReference type="PROSITE-ProRule" id="PRU10028"/>
    </source>
</evidence>
<evidence type="ECO:0000256" key="8">
    <source>
        <dbReference type="SAM" id="MobiDB-lite"/>
    </source>
</evidence>
<evidence type="ECO:0000269" key="9">
    <source>
    </source>
</evidence>
<evidence type="ECO:0000305" key="10"/>
<evidence type="ECO:0000312" key="11">
    <source>
        <dbReference type="RGD" id="2965"/>
    </source>
</evidence>
<evidence type="ECO:0007744" key="12">
    <source>
    </source>
</evidence>
<feature type="signal peptide" evidence="4">
    <location>
        <begin position="1"/>
        <end position="19"/>
    </location>
</feature>
<feature type="chain" id="PRO_0000016773" description="Vascular endothelial growth factor receptor 2">
    <location>
        <begin position="20"/>
        <end position="1343"/>
    </location>
</feature>
<feature type="topological domain" description="Extracellular" evidence="4">
    <location>
        <begin position="20"/>
        <end position="760"/>
    </location>
</feature>
<feature type="transmembrane region" description="Helical" evidence="4">
    <location>
        <begin position="761"/>
        <end position="781"/>
    </location>
</feature>
<feature type="topological domain" description="Cytoplasmic" evidence="4">
    <location>
        <begin position="782"/>
        <end position="1343"/>
    </location>
</feature>
<feature type="domain" description="Ig-like C2-type 1">
    <location>
        <begin position="46"/>
        <end position="109"/>
    </location>
</feature>
<feature type="domain" description="Ig-like C2-type 2">
    <location>
        <begin position="141"/>
        <end position="207"/>
    </location>
</feature>
<feature type="domain" description="Ig-like C2-type 3">
    <location>
        <begin position="224"/>
        <end position="320"/>
    </location>
</feature>
<feature type="domain" description="Ig-like C2-type 4">
    <location>
        <begin position="328"/>
        <end position="414"/>
    </location>
</feature>
<feature type="domain" description="Ig-like C2-type 5">
    <location>
        <begin position="421"/>
        <end position="540"/>
    </location>
</feature>
<feature type="domain" description="Ig-like C2-type 6">
    <location>
        <begin position="547"/>
        <end position="654"/>
    </location>
</feature>
<feature type="domain" description="Ig-like C2-type 7">
    <location>
        <begin position="663"/>
        <end position="749"/>
    </location>
</feature>
<feature type="domain" description="Protein kinase" evidence="6">
    <location>
        <begin position="830"/>
        <end position="1158"/>
    </location>
</feature>
<feature type="region of interest" description="Disordered" evidence="8">
    <location>
        <begin position="1267"/>
        <end position="1314"/>
    </location>
</feature>
<feature type="compositionally biased region" description="Polar residues" evidence="8">
    <location>
        <begin position="1292"/>
        <end position="1305"/>
    </location>
</feature>
<feature type="active site" description="Proton acceptor" evidence="6 7">
    <location>
        <position position="1024"/>
    </location>
</feature>
<feature type="binding site" evidence="6">
    <location>
        <begin position="836"/>
        <end position="844"/>
    </location>
    <ligand>
        <name>ATP</name>
        <dbReference type="ChEBI" id="CHEBI:30616"/>
    </ligand>
</feature>
<feature type="binding site" evidence="6">
    <location>
        <position position="864"/>
    </location>
    <ligand>
        <name>ATP</name>
        <dbReference type="ChEBI" id="CHEBI:30616"/>
    </ligand>
</feature>
<feature type="site" description="Interaction with SHB" evidence="1">
    <location>
        <position position="1171"/>
    </location>
</feature>
<feature type="modified residue" description="Phosphotyrosine" evidence="3">
    <location>
        <position position="797"/>
    </location>
</feature>
<feature type="modified residue" description="Phosphotyrosine; by autocatalysis" evidence="3">
    <location>
        <position position="947"/>
    </location>
</feature>
<feature type="modified residue" description="Phosphoserine" evidence="12">
    <location>
        <position position="978"/>
    </location>
</feature>
<feature type="modified residue" description="Phosphoserine" evidence="12">
    <location>
        <position position="980"/>
    </location>
</feature>
<feature type="modified residue" description="Phosphotyrosine; by autocatalysis" evidence="3">
    <location>
        <position position="992"/>
    </location>
</feature>
<feature type="modified residue" description="Phosphotyrosine; by autocatalysis" evidence="3">
    <location>
        <position position="1050"/>
    </location>
</feature>
<feature type="modified residue" description="Phosphotyrosine; by autocatalysis" evidence="3">
    <location>
        <position position="1055"/>
    </location>
</feature>
<feature type="modified residue" description="Phosphotyrosine; by autocatalysis" evidence="3">
    <location>
        <position position="1171"/>
    </location>
</feature>
<feature type="modified residue" description="Phosphotyrosine; by autocatalysis" evidence="3">
    <location>
        <position position="1210"/>
    </location>
</feature>
<feature type="modified residue" description="Phosphoserine" evidence="2">
    <location>
        <position position="1227"/>
    </location>
</feature>
<feature type="modified residue" description="Phosphoserine" evidence="2">
    <location>
        <position position="1231"/>
    </location>
</feature>
<feature type="modified residue" description="Phosphothreonine" evidence="2">
    <location>
        <position position="1234"/>
    </location>
</feature>
<feature type="modified residue" description="Phosphotyrosine; by autocatalysis" evidence="3">
    <location>
        <position position="1301"/>
    </location>
</feature>
<feature type="modified residue" description="Phosphotyrosine; by autocatalysis" evidence="3">
    <location>
        <position position="1305"/>
    </location>
</feature>
<feature type="modified residue" description="Phosphotyrosine; by autocatalysis" evidence="3">
    <location>
        <position position="1315"/>
    </location>
</feature>
<feature type="glycosylation site" description="N-linked (GlcNAc...) asparagine" evidence="4">
    <location>
        <position position="46"/>
    </location>
</feature>
<feature type="glycosylation site" description="N-linked (GlcNAc...) asparagine" evidence="4">
    <location>
        <position position="96"/>
    </location>
</feature>
<feature type="glycosylation site" description="N-linked (GlcNAc...) asparagine" evidence="4">
    <location>
        <position position="143"/>
    </location>
</feature>
<feature type="glycosylation site" description="N-linked (GlcNAc...) asparagine" evidence="4">
    <location>
        <position position="158"/>
    </location>
</feature>
<feature type="glycosylation site" description="N-linked (GlcNAc...) asparagine" evidence="4">
    <location>
        <position position="245"/>
    </location>
</feature>
<feature type="glycosylation site" description="N-linked (GlcNAc...) asparagine" evidence="4">
    <location>
        <position position="318"/>
    </location>
</feature>
<feature type="glycosylation site" description="N-linked (GlcNAc...) asparagine" evidence="4">
    <location>
        <position position="374"/>
    </location>
</feature>
<feature type="glycosylation site" description="N-linked (GlcNAc...) asparagine" evidence="4">
    <location>
        <position position="395"/>
    </location>
</feature>
<feature type="glycosylation site" description="N-linked (GlcNAc...) asparagine" evidence="4">
    <location>
        <position position="507"/>
    </location>
</feature>
<feature type="glycosylation site" description="N-linked (GlcNAc...) asparagine" evidence="4">
    <location>
        <position position="576"/>
    </location>
</feature>
<feature type="glycosylation site" description="N-linked (GlcNAc...) asparagine" evidence="4">
    <location>
        <position position="609"/>
    </location>
</feature>
<feature type="glycosylation site" description="N-linked (GlcNAc...) asparagine" evidence="4">
    <location>
        <position position="615"/>
    </location>
</feature>
<feature type="glycosylation site" description="N-linked (GlcNAc...) asparagine" evidence="4">
    <location>
        <position position="627"/>
    </location>
</feature>
<feature type="glycosylation site" description="N-linked (GlcNAc...) asparagine" evidence="4">
    <location>
        <position position="671"/>
    </location>
</feature>
<feature type="glycosylation site" description="N-linked (GlcNAc...) asparagine" evidence="4">
    <location>
        <position position="700"/>
    </location>
</feature>
<feature type="glycosylation site" description="N-linked (GlcNAc...) asparagine" evidence="4">
    <location>
        <position position="717"/>
    </location>
</feature>
<feature type="disulfide bond" evidence="5">
    <location>
        <begin position="53"/>
        <end position="103"/>
    </location>
</feature>
<feature type="disulfide bond" evidence="5">
    <location>
        <begin position="150"/>
        <end position="200"/>
    </location>
</feature>
<feature type="disulfide bond" evidence="5">
    <location>
        <begin position="246"/>
        <end position="307"/>
    </location>
</feature>
<feature type="disulfide bond" evidence="5">
    <location>
        <begin position="445"/>
        <end position="526"/>
    </location>
</feature>
<feature type="disulfide bond" evidence="5">
    <location>
        <begin position="567"/>
        <end position="638"/>
    </location>
</feature>
<feature type="disulfide bond" evidence="5">
    <location>
        <begin position="684"/>
        <end position="733"/>
    </location>
</feature>
<feature type="disulfide bond" description="Redox-active" evidence="5">
    <location>
        <begin position="1020"/>
        <end position="1041"/>
    </location>
</feature>
<feature type="disulfide bond" description="Interchain (with C-189 in SLC31A1)" evidence="3">
    <location>
        <position position="1204"/>
    </location>
</feature>
<organism>
    <name type="scientific">Rattus norvegicus</name>
    <name type="common">Rat</name>
    <dbReference type="NCBI Taxonomy" id="10116"/>
    <lineage>
        <taxon>Eukaryota</taxon>
        <taxon>Metazoa</taxon>
        <taxon>Chordata</taxon>
        <taxon>Craniata</taxon>
        <taxon>Vertebrata</taxon>
        <taxon>Euteleostomi</taxon>
        <taxon>Mammalia</taxon>
        <taxon>Eutheria</taxon>
        <taxon>Euarchontoglires</taxon>
        <taxon>Glires</taxon>
        <taxon>Rodentia</taxon>
        <taxon>Myomorpha</taxon>
        <taxon>Muroidea</taxon>
        <taxon>Muridae</taxon>
        <taxon>Murinae</taxon>
        <taxon>Rattus</taxon>
    </lineage>
</organism>
<keyword id="KW-0037">Angiogenesis</keyword>
<keyword id="KW-0067">ATP-binding</keyword>
<keyword id="KW-0965">Cell junction</keyword>
<keyword id="KW-1003">Cell membrane</keyword>
<keyword id="KW-0963">Cytoplasm</keyword>
<keyword id="KW-0968">Cytoplasmic vesicle</keyword>
<keyword id="KW-0217">Developmental protein</keyword>
<keyword id="KW-0221">Differentiation</keyword>
<keyword id="KW-0903">Direct protein sequencing</keyword>
<keyword id="KW-1015">Disulfide bond</keyword>
<keyword id="KW-0256">Endoplasmic reticulum</keyword>
<keyword id="KW-0967">Endosome</keyword>
<keyword id="KW-0325">Glycoprotein</keyword>
<keyword id="KW-0393">Immunoglobulin domain</keyword>
<keyword id="KW-0418">Kinase</keyword>
<keyword id="KW-0472">Membrane</keyword>
<keyword id="KW-0547">Nucleotide-binding</keyword>
<keyword id="KW-0539">Nucleus</keyword>
<keyword id="KW-0597">Phosphoprotein</keyword>
<keyword id="KW-0675">Receptor</keyword>
<keyword id="KW-1185">Reference proteome</keyword>
<keyword id="KW-0677">Repeat</keyword>
<keyword id="KW-0732">Signal</keyword>
<keyword id="KW-0808">Transferase</keyword>
<keyword id="KW-0812">Transmembrane</keyword>
<keyword id="KW-1133">Transmembrane helix</keyword>
<keyword id="KW-0829">Tyrosine-protein kinase</keyword>
<keyword id="KW-0832">Ubl conjugation</keyword>
<reference key="1">
    <citation type="submission" date="1997-03" db="EMBL/GenBank/DDBJ databases">
        <authorList>
            <person name="Wen Y."/>
            <person name="Edelman J.L."/>
            <person name="De Vries G.W."/>
            <person name="Sachs G."/>
        </authorList>
    </citation>
    <scope>NUCLEOTIDE SEQUENCE [MRNA]</scope>
    <source>
        <tissue>Retina</tissue>
    </source>
</reference>
<reference key="2">
    <citation type="journal article" date="2000" name="Dev. Dyn.">
        <title>Regulation of VEGF and VEGF receptor expression in the rodent mammary gland during pregnancy, lactation, and involution.</title>
        <authorList>
            <person name="Pepper M.S."/>
            <person name="Baetens D."/>
            <person name="Mandriota S.J."/>
            <person name="Di Sanza C."/>
            <person name="Oikemus S."/>
            <person name="Lane T.F."/>
            <person name="Soriano J.V."/>
            <person name="Montesano R."/>
            <person name="Iruela-Arispe M.L."/>
        </authorList>
    </citation>
    <scope>TISSUE SPECIFICITY</scope>
    <scope>DEVELOPMENTAL STAGE</scope>
</reference>
<reference key="3">
    <citation type="submission" date="2007-07" db="UniProtKB">
        <authorList>
            <person name="Lubec G."/>
            <person name="Kang S.U."/>
        </authorList>
    </citation>
    <scope>PROTEIN SEQUENCE OF 1040-1047</scope>
    <scope>IDENTIFICATION BY MASS SPECTROMETRY</scope>
    <source>
        <strain>Sprague-Dawley</strain>
        <tissue>Brain</tissue>
    </source>
</reference>
<reference key="4">
    <citation type="journal article" date="2012" name="Nat. Commun.">
        <title>Quantitative maps of protein phosphorylation sites across 14 different rat organs and tissues.</title>
        <authorList>
            <person name="Lundby A."/>
            <person name="Secher A."/>
            <person name="Lage K."/>
            <person name="Nordsborg N.B."/>
            <person name="Dmytriyev A."/>
            <person name="Lundby C."/>
            <person name="Olsen J.V."/>
        </authorList>
    </citation>
    <scope>PHOSPHORYLATION [LARGE SCALE ANALYSIS] AT SER-978 AND SER-980</scope>
    <scope>IDENTIFICATION BY MASS SPECTROMETRY [LARGE SCALE ANALYSIS]</scope>
</reference>
<proteinExistence type="evidence at protein level"/>
<comment type="function">
    <text evidence="1">Tyrosine-protein kinase that acts as a cell-surface receptor for VEGFA, VEGFC and VEGFD. Plays an essential role in the regulation of angiogenesis, vascular development, vascular permeability, and embryonic hematopoiesis. Promotes proliferation, survival, migration and differentiation of endothelial cells. Promotes reorganization of the actin cytoskeleton. Isoforms lacking a transmembrane domain may function as decoy receptors for VEGFA, VEGFC and/or VEGFD. Modulates FLT1 and FLT4 signaling by forming heterodimers. Binding of vascular growth factors to isoform 1 leads to the activation of several signaling cascades. Activation of PLCG1 leads to the production of the cellular signaling molecules diacylglycerol and inositol-1,4,5-trisphosphate and the activation of protein kinase C. Mediates activation of MAPK1/ERK2, MAPK3/ERK1 and the MAP kinase signaling pathway, as well as of the AKT1 signaling pathway. Mediates phosphorylation of PIK3R1, the regulatory subunit of phosphatidylinositol 3-kinase, reorganization of the actin cytoskeleton and activation of PTK2/FAK1. Required for VEGFA-mediated induction of NOS2 and NOS3, leading to the production of the signaling molecule nitric oxide (NO) by endothelial cells. Phosphorylates PLCG1. Promotes phosphorylation of FYN, NCK1, NOS3, PIK3R1, PTK2/FAK1 and SRC (By similarity).</text>
</comment>
<comment type="catalytic activity">
    <reaction evidence="7">
        <text>L-tyrosyl-[protein] + ATP = O-phospho-L-tyrosyl-[protein] + ADP + H(+)</text>
        <dbReference type="Rhea" id="RHEA:10596"/>
        <dbReference type="Rhea" id="RHEA-COMP:10136"/>
        <dbReference type="Rhea" id="RHEA-COMP:20101"/>
        <dbReference type="ChEBI" id="CHEBI:15378"/>
        <dbReference type="ChEBI" id="CHEBI:30616"/>
        <dbReference type="ChEBI" id="CHEBI:46858"/>
        <dbReference type="ChEBI" id="CHEBI:61978"/>
        <dbReference type="ChEBI" id="CHEBI:456216"/>
        <dbReference type="EC" id="2.7.10.1"/>
    </reaction>
</comment>
<comment type="activity regulation">
    <text evidence="1">Present in an inactive conformation in the absence of bound ligand. Binding of VEGFA, VEGFC or VEGFD leads to dimerization and activation by autophosphorylation on tyrosine residues. May be regulated by hydrogen sulfide (H(2)S) levels via a sensitive intracellular disulfide bond (By similarity).</text>
</comment>
<comment type="subunit">
    <text evidence="3">Homodimer in the presence of bound dimeric VEGFA, VEGFC or VEGFD ligands; monomeric in the absence of bound ligands. Can also form heterodimers with FLT1/VEGFR1 and KDR/VEGFR2. Interacts (tyrosine phosphorylated) with LFYN, NCK1, PLCG1. Interacts (tyrosine-phosphorylated active form preferentially) with DAB2IP (via C2 domain and active form preferentially); the interaction occurs at the late phase of VEGFA response and inhibits KDR/VEGFR2 activity. Interacts with SHBSH2D2A/TSAD, GRB2, MYOF, CBL and PDCD6. Interacts (via C-terminus domain) with ERN1 (via kinase domain); the interaction is facilitated in a XBP1- and vascular endothelial growth factor (VEGF)-dependent manner in endothelial cells (By similarity). Interacts (via juxtamembrane region) with chaperone PDCL3 (via thioredoxin fold region); the interaction leads to increased KDR/VEGFR2 abundance through inhibition of its ubiquitination and degradation (By similarity). Interacts (tyrosine phosphorylated) with CCDC88A/GIV (via SH2-like region); binding requires autophosphorylation of the KDR/VEGFR2 C-terminal region (By similarity). Interacts with isoform 2 of BSG (By similarity). Interacts with SLC31A1; this interaction is induced upon VEGFA stimulation leading to SLC31A1 and KDR subsequent co-internalization to early endosomes, thereby activating KDR downstream signaling in endothelial cells (By similarity).</text>
</comment>
<comment type="subcellular location">
    <subcellularLocation>
        <location evidence="3">Cell membrane</location>
        <topology evidence="1">Single-pass type I membrane protein</topology>
    </subcellularLocation>
    <subcellularLocation>
        <location evidence="1">Cytoplasm</location>
    </subcellularLocation>
    <subcellularLocation>
        <location evidence="1">Nucleus</location>
    </subcellularLocation>
    <subcellularLocation>
        <location evidence="1">Cytoplasmic vesicle</location>
    </subcellularLocation>
    <subcellularLocation>
        <location evidence="1">Early endosome</location>
    </subcellularLocation>
    <subcellularLocation>
        <location evidence="1">Cell junction</location>
    </subcellularLocation>
    <subcellularLocation>
        <location evidence="3">Endoplasmic reticulum</location>
    </subcellularLocation>
    <text evidence="3">Detected on caveolae-enriched lipid rafts at the cell surface. Is recycled from the plasma membrane to endosomes and back again. Phosphorylation triggered by VEGFA binding promotes internalization and subsequent degradation. VEGFA binding triggers internalization and translocation to the nucleus. Localized with RAP1A at cell-cell junctions. Colocalizes with ERN1 and XBP1 in the endoplasmic reticulum in endothelial cells in a vascular endothelial growth factor (VEGF)-dependent manner (By similarity).</text>
</comment>
<comment type="tissue specificity">
    <text evidence="9">Expressed in the post-pubertal mammary glands.</text>
</comment>
<comment type="developmental stage">
    <text evidence="9">Increases during pregnancy (1.6-fold at 4 days) and lactation (3.8-fold at 7 days). Decreases in the early phases of involution (45%, 50% and 34% on days 1, 2, and 3 respectively).</text>
</comment>
<comment type="domain">
    <text evidence="1">The second and third Ig-like C2-type (immunoglobulin-like) domains are sufficient for VEGFC binding.</text>
</comment>
<comment type="PTM">
    <text evidence="1">N-glycosylated.</text>
</comment>
<comment type="PTM">
    <text evidence="1">Ubiquitinated. Tyrosine phosphorylation of the receptor promotes its poly-ubiquitination, leading to its degradation via the proteasome or lysosomal proteases (By similarity).</text>
</comment>
<comment type="PTM">
    <text evidence="3">Autophosphorylated on tyrosine residues upon ligand binding. Autophosphorylation occurs in trans, i.e. one subunit of the dimeric receptor phosphorylates tyrosine residues on the other subunit. Phosphorylation at Tyr-947 is important for interaction with SH2D2A/TSAD and VEGFA-mediated reorganization of the actin cytoskeleton. Phosphorylation at Tyr-1171 is important for interaction with PLCG1 and SHB. Phosphorylation at Tyr-1210 is important for interaction with NCK1 and FYN. Dephosphorylated by PTPRB. Dephosphorylated by PTPRJ at Tyr-797, Tyr-947, Tyr-992, Tyr-1050, Tyr-1055, Tyr-1171 and Tyr-1210 (By similarity).</text>
</comment>
<comment type="PTM">
    <text evidence="1">The inhibitory disulfide bond between Cys-1020 and Cys-1041 may serve as a specific molecular switch for H(2)S-induced modification that regulates KDR/VEGFR2 function.</text>
</comment>
<comment type="similarity">
    <text evidence="6">Belongs to the protein kinase superfamily. Tyr protein kinase family. CSF-1/PDGF receptor subfamily.</text>
</comment>
<sequence length="1343" mass="150394">MESRALLAVALWFCVETRAASVGLPGDSLHPPKLSTQKDILTILANTTLQITCRGQRDLDWLWPNTPRDSEERVLVTECGDSIFCKTLTVPRVVGNDTGAYKCFYRDTDVSSIVYVYVQDHRSPFIASVSDEHGIVYITENKNKTVVIPCRGSISNLNVSLCARYPEKRFVPDGNRISWDSEKGFTIPSYMISYAGMVFCEAKINDETYQSIMYIVLVVGYRIYDVVLSPPHEIELSAGEKLVLNCTARTELNVGLDFSWQFPSSKHQHKKIVNRDVKSLPGTVAKMFLSTLTIDSVTKSDQGEYTCTAYSGLMTKKNKTFVRVHTKPFIAFGSGMKSLVEATVGSQVRIPVKYLSYPAPDIKWYRNGRPIESNYTMIVGDELTIMEVSERDAGNYTVILTNPISMEKQSHMVSLVVNVPPQIGEKALISPMDSYQYGTMQTLTCTVYANPPLHHIQWYWQLEEACSYRPSQTNPYTCKEWRHVKDFQGGNKIEVTKNQYALIEGKNKTVSTLVIQAAYVSALYKCEAINKAGRGERVISFHVIRGPEITVQPATQPTERESMSLLCTADRNTFENLTWYKLGSQATSVHMGESLTPVCKNLDALWKLNGTVFSNSTNDILIVAFQNASLQDQGNYVCSAQDKKTKKRHCLVKQLVILERMAPMITGNLENQTTTIGETIEVVCPTSGNPTPLITWFKDNETLVEDSGIVLKDGNRNLTIRRVRKEDGGLYTCQACNVLGCARAETLFIIEGVQEKTNLEVIILVGTAVIAMFFWLLLVILVRTVKRANEGELKTGYLSIVMDPDELPLDERCERLPYDASKWEFPRDRLKLGKPLGRGAFGQVIEADAFGIDKTATCKTVAVKMLKEGATHSEHRALMSELKILIHIGHHLNVVNLLGACTKPGGPLMVIVEFCKFGNLSTYLRGKRNEFVPYKSKGARFRSGKDYVGELSVDLKRRLDSITSSQSSASSGFVEEKSLSDVEEEEASEELYKDFLTLEHLICYSFQVAKGMEFLASRKCIHRDLAARNILLSEKNVVKICDFGLARDIYKDPDYVRKGDPRLPLKWMAPETIFDRIYTIQSGVWSFGVLLWEIFSLGASPYPGVKIDEKFCRRLKEGTRMRAPDYTTPEMYQTMLDCWHEDPNQRPAFSELVEHLGNLLQANAQQDGKDYIVLPMSETLSMEEDSGLSLPTSPVSCMEEEEVCDPKFHYDNTAGISHYLQNSKRKSRPVSVKTFEDIPLEEPEVKVIPDDSQTDSGMVLASEELKTLEDRNKLSPSFGGMMPSKSRESVASEGSNQTSGYQSGYHSDDTDTTVYSSDEAGLLKLVDVAGHVDSGTTLRSSPV</sequence>
<protein>
    <recommendedName>
        <fullName evidence="10">Vascular endothelial growth factor receptor 2</fullName>
        <shortName>VEGFR-2</shortName>
        <ecNumber evidence="3">2.7.10.1</ecNumber>
    </recommendedName>
    <alternativeName>
        <fullName>Fetal liver kinase 1</fullName>
        <shortName>FLK-1</shortName>
    </alternativeName>
    <alternativeName>
        <fullName>Protein-tyrosine kinase receptor flk-1</fullName>
    </alternativeName>
    <cdAntigenName>CD309</cdAntigenName>
</protein>
<gene>
    <name evidence="11" type="primary">Kdr</name>
    <name type="synonym">Flk1</name>
</gene>
<accession>O08775</accession>